<gene>
    <name evidence="1" type="primary">flgH</name>
    <name type="ordered locus">IL1141</name>
</gene>
<evidence type="ECO:0000255" key="1">
    <source>
        <dbReference type="HAMAP-Rule" id="MF_00415"/>
    </source>
</evidence>
<keyword id="KW-0975">Bacterial flagellum</keyword>
<keyword id="KW-0998">Cell outer membrane</keyword>
<keyword id="KW-0449">Lipoprotein</keyword>
<keyword id="KW-0472">Membrane</keyword>
<keyword id="KW-0564">Palmitate</keyword>
<keyword id="KW-1185">Reference proteome</keyword>
<keyword id="KW-0732">Signal</keyword>
<dbReference type="EMBL" id="AE017340">
    <property type="protein sequence ID" value="AAV81981.1"/>
    <property type="molecule type" value="Genomic_DNA"/>
</dbReference>
<dbReference type="RefSeq" id="WP_011234392.1">
    <property type="nucleotide sequence ID" value="NC_006512.1"/>
</dbReference>
<dbReference type="SMR" id="Q5R0P9"/>
<dbReference type="STRING" id="283942.IL1141"/>
<dbReference type="GeneID" id="41336309"/>
<dbReference type="KEGG" id="ilo:IL1141"/>
<dbReference type="eggNOG" id="COG2063">
    <property type="taxonomic scope" value="Bacteria"/>
</dbReference>
<dbReference type="HOGENOM" id="CLU_069313_0_2_6"/>
<dbReference type="OrthoDB" id="9789463at2"/>
<dbReference type="Proteomes" id="UP000001171">
    <property type="component" value="Chromosome"/>
</dbReference>
<dbReference type="GO" id="GO:0009427">
    <property type="term" value="C:bacterial-type flagellum basal body, distal rod, L ring"/>
    <property type="evidence" value="ECO:0007669"/>
    <property type="project" value="InterPro"/>
</dbReference>
<dbReference type="GO" id="GO:0009279">
    <property type="term" value="C:cell outer membrane"/>
    <property type="evidence" value="ECO:0007669"/>
    <property type="project" value="UniProtKB-SubCell"/>
</dbReference>
<dbReference type="GO" id="GO:0003774">
    <property type="term" value="F:cytoskeletal motor activity"/>
    <property type="evidence" value="ECO:0007669"/>
    <property type="project" value="InterPro"/>
</dbReference>
<dbReference type="GO" id="GO:0071973">
    <property type="term" value="P:bacterial-type flagellum-dependent cell motility"/>
    <property type="evidence" value="ECO:0007669"/>
    <property type="project" value="InterPro"/>
</dbReference>
<dbReference type="HAMAP" id="MF_00415">
    <property type="entry name" value="FlgH"/>
    <property type="match status" value="1"/>
</dbReference>
<dbReference type="InterPro" id="IPR000527">
    <property type="entry name" value="Flag_Lring"/>
</dbReference>
<dbReference type="NCBIfam" id="NF001304">
    <property type="entry name" value="PRK00249.1-4"/>
    <property type="match status" value="1"/>
</dbReference>
<dbReference type="NCBIfam" id="NF009338">
    <property type="entry name" value="PRK12698.1"/>
    <property type="match status" value="1"/>
</dbReference>
<dbReference type="PANTHER" id="PTHR34933">
    <property type="entry name" value="FLAGELLAR L-RING PROTEIN"/>
    <property type="match status" value="1"/>
</dbReference>
<dbReference type="PANTHER" id="PTHR34933:SF1">
    <property type="entry name" value="FLAGELLAR L-RING PROTEIN"/>
    <property type="match status" value="1"/>
</dbReference>
<dbReference type="Pfam" id="PF02107">
    <property type="entry name" value="FlgH"/>
    <property type="match status" value="1"/>
</dbReference>
<dbReference type="PRINTS" id="PR01008">
    <property type="entry name" value="FLGLRINGFLGH"/>
</dbReference>
<dbReference type="PROSITE" id="PS51257">
    <property type="entry name" value="PROKAR_LIPOPROTEIN"/>
    <property type="match status" value="1"/>
</dbReference>
<comment type="function">
    <text evidence="1">Assembles around the rod to form the L-ring and probably protects the motor/basal body from shearing forces during rotation.</text>
</comment>
<comment type="subunit">
    <text evidence="1">The basal body constitutes a major portion of the flagellar organelle and consists of four rings (L,P,S, and M) mounted on a central rod.</text>
</comment>
<comment type="subcellular location">
    <subcellularLocation>
        <location evidence="1">Cell outer membrane</location>
        <topology evidence="1">Lipid-anchor</topology>
    </subcellularLocation>
    <subcellularLocation>
        <location evidence="1">Bacterial flagellum basal body</location>
    </subcellularLocation>
</comment>
<comment type="similarity">
    <text evidence="1">Belongs to the FlgH family.</text>
</comment>
<proteinExistence type="inferred from homology"/>
<name>FLGH_IDILO</name>
<sequence>MRSLLFSLTALVLAGCVQTPHKPMPDDPYYAPVLPEERAQPVVPTGSLFQDAYADNLYSDIKARRLGDIITVTLREQTTASKTATTETSKESTAELAAPTAFGRNITVGGNPLSAGINGTREFSGDGSSDQSNQLNGEITVTVIKVLPNGNLIVRGEKWMRINTGDEYIRLTGMIRPQDITAANQIPSTRVANARIEYSGTGSLAQVQEQGWLTRFFNSPIWPF</sequence>
<protein>
    <recommendedName>
        <fullName evidence="1">Flagellar L-ring protein</fullName>
    </recommendedName>
    <alternativeName>
        <fullName evidence="1">Basal body L-ring protein</fullName>
    </alternativeName>
</protein>
<feature type="signal peptide" evidence="1">
    <location>
        <begin position="1"/>
        <end position="15"/>
    </location>
</feature>
<feature type="chain" id="PRO_0000009452" description="Flagellar L-ring protein">
    <location>
        <begin position="16"/>
        <end position="224"/>
    </location>
</feature>
<feature type="lipid moiety-binding region" description="N-palmitoyl cysteine" evidence="1">
    <location>
        <position position="16"/>
    </location>
</feature>
<feature type="lipid moiety-binding region" description="S-diacylglycerol cysteine" evidence="1">
    <location>
        <position position="16"/>
    </location>
</feature>
<organism>
    <name type="scientific">Idiomarina loihiensis (strain ATCC BAA-735 / DSM 15497 / L2-TR)</name>
    <dbReference type="NCBI Taxonomy" id="283942"/>
    <lineage>
        <taxon>Bacteria</taxon>
        <taxon>Pseudomonadati</taxon>
        <taxon>Pseudomonadota</taxon>
        <taxon>Gammaproteobacteria</taxon>
        <taxon>Alteromonadales</taxon>
        <taxon>Idiomarinaceae</taxon>
        <taxon>Idiomarina</taxon>
    </lineage>
</organism>
<accession>Q5R0P9</accession>
<reference key="1">
    <citation type="journal article" date="2004" name="Proc. Natl. Acad. Sci. U.S.A.">
        <title>Genome sequence of the deep-sea gamma-proteobacterium Idiomarina loihiensis reveals amino acid fermentation as a source of carbon and energy.</title>
        <authorList>
            <person name="Hou S."/>
            <person name="Saw J.H."/>
            <person name="Lee K.S."/>
            <person name="Freitas T.A."/>
            <person name="Belisle C."/>
            <person name="Kawarabayasi Y."/>
            <person name="Donachie S.P."/>
            <person name="Pikina A."/>
            <person name="Galperin M.Y."/>
            <person name="Koonin E.V."/>
            <person name="Makarova K.S."/>
            <person name="Omelchenko M.V."/>
            <person name="Sorokin A."/>
            <person name="Wolf Y.I."/>
            <person name="Li Q.X."/>
            <person name="Keum Y.S."/>
            <person name="Campbell S."/>
            <person name="Denery J."/>
            <person name="Aizawa S."/>
            <person name="Shibata S."/>
            <person name="Malahoff A."/>
            <person name="Alam M."/>
        </authorList>
    </citation>
    <scope>NUCLEOTIDE SEQUENCE [LARGE SCALE GENOMIC DNA]</scope>
    <source>
        <strain>ATCC BAA-735 / DSM 15497 / L2-TR</strain>
    </source>
</reference>